<name>CBY1_HUMAN</name>
<dbReference type="EMBL" id="AF331041">
    <property type="protein sequence ID" value="AAL56062.1"/>
    <property type="molecule type" value="mRNA"/>
</dbReference>
<dbReference type="EMBL" id="AB111855">
    <property type="protein sequence ID" value="BAC78839.1"/>
    <property type="molecule type" value="mRNA"/>
</dbReference>
<dbReference type="EMBL" id="AL136686">
    <property type="protein sequence ID" value="CAB66621.1"/>
    <property type="molecule type" value="mRNA"/>
</dbReference>
<dbReference type="EMBL" id="AL050345">
    <property type="protein sequence ID" value="CAB43547.1"/>
    <property type="molecule type" value="mRNA"/>
</dbReference>
<dbReference type="EMBL" id="CR456410">
    <property type="protein sequence ID" value="CAG30296.1"/>
    <property type="molecule type" value="mRNA"/>
</dbReference>
<dbReference type="EMBL" id="AK311928">
    <property type="protein sequence ID" value="BAG34869.1"/>
    <property type="molecule type" value="mRNA"/>
</dbReference>
<dbReference type="EMBL" id="AL021707">
    <property type="status" value="NOT_ANNOTATED_CDS"/>
    <property type="molecule type" value="Genomic_DNA"/>
</dbReference>
<dbReference type="EMBL" id="CH471095">
    <property type="protein sequence ID" value="EAW60254.1"/>
    <property type="molecule type" value="Genomic_DNA"/>
</dbReference>
<dbReference type="EMBL" id="BC016139">
    <property type="protein sequence ID" value="AAH16139.1"/>
    <property type="molecule type" value="mRNA"/>
</dbReference>
<dbReference type="EMBL" id="AB015347">
    <property type="protein sequence ID" value="BAA88119.1"/>
    <property type="molecule type" value="mRNA"/>
</dbReference>
<dbReference type="EMBL" id="BK005534">
    <property type="protein sequence ID" value="DAA05582.1"/>
    <property type="molecule type" value="Genomic_DNA"/>
</dbReference>
<dbReference type="CCDS" id="CCDS13974.1"/>
<dbReference type="RefSeq" id="NP_001002880.3">
    <property type="nucleotide sequence ID" value="NM_001002880.4"/>
</dbReference>
<dbReference type="RefSeq" id="NP_056188.1">
    <property type="nucleotide sequence ID" value="NM_015373.4"/>
</dbReference>
<dbReference type="PDB" id="4WRQ">
    <property type="method" value="X-ray"/>
    <property type="resolution" value="2.41 A"/>
    <property type="chains" value="C/D=12-29"/>
</dbReference>
<dbReference type="PDBsum" id="4WRQ"/>
<dbReference type="SMR" id="Q9Y3M2"/>
<dbReference type="BioGRID" id="117311">
    <property type="interactions" value="180"/>
</dbReference>
<dbReference type="CORUM" id="Q9Y3M2"/>
<dbReference type="DIP" id="DIP-29651N"/>
<dbReference type="ELM" id="Q9Y3M2"/>
<dbReference type="FunCoup" id="Q9Y3M2">
    <property type="interactions" value="1465"/>
</dbReference>
<dbReference type="IntAct" id="Q9Y3M2">
    <property type="interactions" value="57"/>
</dbReference>
<dbReference type="MINT" id="Q9Y3M2"/>
<dbReference type="STRING" id="9606.ENSP00000478962"/>
<dbReference type="iPTMnet" id="Q9Y3M2"/>
<dbReference type="PhosphoSitePlus" id="Q9Y3M2"/>
<dbReference type="BioMuta" id="CBY1"/>
<dbReference type="DMDM" id="20454882"/>
<dbReference type="jPOST" id="Q9Y3M2"/>
<dbReference type="MassIVE" id="Q9Y3M2"/>
<dbReference type="PaxDb" id="9606-ENSP00000478962"/>
<dbReference type="PeptideAtlas" id="Q9Y3M2"/>
<dbReference type="ProteomicsDB" id="86044"/>
<dbReference type="Pumba" id="Q9Y3M2"/>
<dbReference type="Antibodypedia" id="26394">
    <property type="antibodies" value="163 antibodies from 28 providers"/>
</dbReference>
<dbReference type="DNASU" id="25776"/>
<dbReference type="Ensembl" id="ENST00000216029.8">
    <property type="protein sequence ID" value="ENSP00000216029.3"/>
    <property type="gene ID" value="ENSG00000100211.12"/>
</dbReference>
<dbReference type="Ensembl" id="ENST00000396811.6">
    <property type="protein sequence ID" value="ENSP00000380026.2"/>
    <property type="gene ID" value="ENSG00000100211.12"/>
</dbReference>
<dbReference type="Ensembl" id="ENST00000411557.6">
    <property type="protein sequence ID" value="ENSP00000413934.2"/>
    <property type="gene ID" value="ENSG00000100211.12"/>
</dbReference>
<dbReference type="Ensembl" id="ENST00000416285.6">
    <property type="protein sequence ID" value="ENSP00000412260.2"/>
    <property type="gene ID" value="ENSG00000100211.12"/>
</dbReference>
<dbReference type="GeneID" id="25776"/>
<dbReference type="KEGG" id="hsa:25776"/>
<dbReference type="MANE-Select" id="ENST00000216029.8">
    <property type="protein sequence ID" value="ENSP00000216029.3"/>
    <property type="RefSeq nucleotide sequence ID" value="NM_015373.4"/>
    <property type="RefSeq protein sequence ID" value="NP_056188.1"/>
</dbReference>
<dbReference type="UCSC" id="uc003awc.5">
    <property type="organism name" value="human"/>
</dbReference>
<dbReference type="AGR" id="HGNC:1307"/>
<dbReference type="CTD" id="25776"/>
<dbReference type="DisGeNET" id="25776"/>
<dbReference type="GeneCards" id="CBY1"/>
<dbReference type="HGNC" id="HGNC:1307">
    <property type="gene designation" value="CBY1"/>
</dbReference>
<dbReference type="HPA" id="ENSG00000100211">
    <property type="expression patterns" value="Low tissue specificity"/>
</dbReference>
<dbReference type="MalaCards" id="CBY1"/>
<dbReference type="MIM" id="607757">
    <property type="type" value="gene"/>
</dbReference>
<dbReference type="neXtProt" id="NX_Q9Y3M2"/>
<dbReference type="OpenTargets" id="ENSG00000100211"/>
<dbReference type="Orphanet" id="475">
    <property type="disease" value="Joubert syndrome"/>
</dbReference>
<dbReference type="PharmGKB" id="PA25886"/>
<dbReference type="VEuPathDB" id="HostDB:ENSG00000100211"/>
<dbReference type="eggNOG" id="ENOG502S6C8">
    <property type="taxonomic scope" value="Eukaryota"/>
</dbReference>
<dbReference type="GeneTree" id="ENSGT00940000153137"/>
<dbReference type="InParanoid" id="Q9Y3M2"/>
<dbReference type="OrthoDB" id="2145765at2759"/>
<dbReference type="PAN-GO" id="Q9Y3M2">
    <property type="GO annotations" value="2 GO annotations based on evolutionary models"/>
</dbReference>
<dbReference type="PhylomeDB" id="Q9Y3M2"/>
<dbReference type="TreeFam" id="TF324419"/>
<dbReference type="PathwayCommons" id="Q9Y3M2"/>
<dbReference type="Reactome" id="R-HSA-3769402">
    <property type="pathway name" value="Deactivation of the beta-catenin transactivating complex"/>
</dbReference>
<dbReference type="SignaLink" id="Q9Y3M2"/>
<dbReference type="SIGNOR" id="Q9Y3M2"/>
<dbReference type="BioGRID-ORCS" id="25776">
    <property type="hits" value="16 hits in 1152 CRISPR screens"/>
</dbReference>
<dbReference type="CD-CODE" id="804901D1">
    <property type="entry name" value="Nuclear speckle"/>
</dbReference>
<dbReference type="CD-CODE" id="8C2F96ED">
    <property type="entry name" value="Centrosome"/>
</dbReference>
<dbReference type="CD-CODE" id="B5B9A610">
    <property type="entry name" value="PML body"/>
</dbReference>
<dbReference type="ChiTaRS" id="CBY1">
    <property type="organism name" value="human"/>
</dbReference>
<dbReference type="EvolutionaryTrace" id="Q9Y3M2"/>
<dbReference type="GeneWiki" id="CBY1"/>
<dbReference type="GenomeRNAi" id="25776"/>
<dbReference type="Pharos" id="Q9Y3M2">
    <property type="development level" value="Tbio"/>
</dbReference>
<dbReference type="PRO" id="PR:Q9Y3M2"/>
<dbReference type="Proteomes" id="UP000005640">
    <property type="component" value="Chromosome 22"/>
</dbReference>
<dbReference type="RNAct" id="Q9Y3M2">
    <property type="molecule type" value="protein"/>
</dbReference>
<dbReference type="Bgee" id="ENSG00000100211">
    <property type="expression patterns" value="Expressed in oocyte and 192 other cell types or tissues"/>
</dbReference>
<dbReference type="ExpressionAtlas" id="Q9Y3M2">
    <property type="expression patterns" value="baseline and differential"/>
</dbReference>
<dbReference type="GO" id="GO:0005814">
    <property type="term" value="C:centriole"/>
    <property type="evidence" value="ECO:0000314"/>
    <property type="project" value="UniProtKB"/>
</dbReference>
<dbReference type="GO" id="GO:0005813">
    <property type="term" value="C:centrosome"/>
    <property type="evidence" value="ECO:0000314"/>
    <property type="project" value="HPA"/>
</dbReference>
<dbReference type="GO" id="GO:0036064">
    <property type="term" value="C:ciliary basal body"/>
    <property type="evidence" value="ECO:0007669"/>
    <property type="project" value="Ensembl"/>
</dbReference>
<dbReference type="GO" id="GO:0005829">
    <property type="term" value="C:cytosol"/>
    <property type="evidence" value="ECO:0000304"/>
    <property type="project" value="Reactome"/>
</dbReference>
<dbReference type="GO" id="GO:0016607">
    <property type="term" value="C:nuclear speck"/>
    <property type="evidence" value="ECO:0007669"/>
    <property type="project" value="UniProtKB-SubCell"/>
</dbReference>
<dbReference type="GO" id="GO:0005730">
    <property type="term" value="C:nucleolus"/>
    <property type="evidence" value="ECO:0000314"/>
    <property type="project" value="HPA"/>
</dbReference>
<dbReference type="GO" id="GO:0005654">
    <property type="term" value="C:nucleoplasm"/>
    <property type="evidence" value="ECO:0000314"/>
    <property type="project" value="HPA"/>
</dbReference>
<dbReference type="GO" id="GO:0005634">
    <property type="term" value="C:nucleus"/>
    <property type="evidence" value="ECO:0000314"/>
    <property type="project" value="UniProtKB"/>
</dbReference>
<dbReference type="GO" id="GO:0036126">
    <property type="term" value="C:sperm flagellum"/>
    <property type="evidence" value="ECO:0000250"/>
    <property type="project" value="UniProtKB"/>
</dbReference>
<dbReference type="GO" id="GO:0005802">
    <property type="term" value="C:trans-Golgi network"/>
    <property type="evidence" value="ECO:0000314"/>
    <property type="project" value="UniProtKB"/>
</dbReference>
<dbReference type="GO" id="GO:0008013">
    <property type="term" value="F:beta-catenin binding"/>
    <property type="evidence" value="ECO:0000314"/>
    <property type="project" value="UniProtKB"/>
</dbReference>
<dbReference type="GO" id="GO:0042802">
    <property type="term" value="F:identical protein binding"/>
    <property type="evidence" value="ECO:0000353"/>
    <property type="project" value="UniProtKB"/>
</dbReference>
<dbReference type="GO" id="GO:0042803">
    <property type="term" value="F:protein homodimerization activity"/>
    <property type="evidence" value="ECO:0000314"/>
    <property type="project" value="CAFA"/>
</dbReference>
<dbReference type="GO" id="GO:0060070">
    <property type="term" value="P:canonical Wnt signaling pathway"/>
    <property type="evidence" value="ECO:0007669"/>
    <property type="project" value="Ensembl"/>
</dbReference>
<dbReference type="GO" id="GO:0055007">
    <property type="term" value="P:cardiac muscle cell differentiation"/>
    <property type="evidence" value="ECO:0000250"/>
    <property type="project" value="UniProtKB"/>
</dbReference>
<dbReference type="GO" id="GO:0060271">
    <property type="term" value="P:cilium assembly"/>
    <property type="evidence" value="ECO:0007669"/>
    <property type="project" value="Ensembl"/>
</dbReference>
<dbReference type="GO" id="GO:0045444">
    <property type="term" value="P:fat cell differentiation"/>
    <property type="evidence" value="ECO:0000250"/>
    <property type="project" value="UniProtKB"/>
</dbReference>
<dbReference type="GO" id="GO:0033504">
    <property type="term" value="P:floor plate development"/>
    <property type="evidence" value="ECO:0007669"/>
    <property type="project" value="Ensembl"/>
</dbReference>
<dbReference type="GO" id="GO:0090090">
    <property type="term" value="P:negative regulation of canonical Wnt signaling pathway"/>
    <property type="evidence" value="ECO:0007669"/>
    <property type="project" value="Ensembl"/>
</dbReference>
<dbReference type="GO" id="GO:0045892">
    <property type="term" value="P:negative regulation of DNA-templated transcription"/>
    <property type="evidence" value="ECO:0000314"/>
    <property type="project" value="UniProtKB"/>
</dbReference>
<dbReference type="GO" id="GO:0030178">
    <property type="term" value="P:negative regulation of Wnt signaling pathway"/>
    <property type="evidence" value="ECO:0000314"/>
    <property type="project" value="UniProtKB"/>
</dbReference>
<dbReference type="GO" id="GO:0051289">
    <property type="term" value="P:protein homotetramerization"/>
    <property type="evidence" value="ECO:0000314"/>
    <property type="project" value="CAFA"/>
</dbReference>
<dbReference type="GO" id="GO:0008104">
    <property type="term" value="P:protein localization"/>
    <property type="evidence" value="ECO:0000315"/>
    <property type="project" value="UniProtKB"/>
</dbReference>
<dbReference type="CDD" id="cd07429">
    <property type="entry name" value="Cby_like"/>
    <property type="match status" value="1"/>
</dbReference>
<dbReference type="DisProt" id="DP00709"/>
<dbReference type="InterPro" id="IPR028118">
    <property type="entry name" value="Chibby_fam"/>
</dbReference>
<dbReference type="PANTHER" id="PTHR21533">
    <property type="entry name" value="LEUCINE-RICH PROTEIN"/>
    <property type="match status" value="1"/>
</dbReference>
<dbReference type="PANTHER" id="PTHR21533:SF20">
    <property type="entry name" value="PROTEIN CHIBBY HOMOLOG 1"/>
    <property type="match status" value="1"/>
</dbReference>
<dbReference type="Pfam" id="PF14645">
    <property type="entry name" value="Chibby"/>
    <property type="match status" value="1"/>
</dbReference>
<evidence type="ECO:0000250" key="1">
    <source>
        <dbReference type="UniProtKB" id="Q8K4I6"/>
    </source>
</evidence>
<evidence type="ECO:0000250" key="2">
    <source>
        <dbReference type="UniProtKB" id="Q9D1C2"/>
    </source>
</evidence>
<evidence type="ECO:0000255" key="3"/>
<evidence type="ECO:0000256" key="4">
    <source>
        <dbReference type="SAM" id="MobiDB-lite"/>
    </source>
</evidence>
<evidence type="ECO:0000269" key="5">
    <source>
    </source>
</evidence>
<evidence type="ECO:0000269" key="6">
    <source>
    </source>
</evidence>
<evidence type="ECO:0000269" key="7">
    <source>
    </source>
</evidence>
<evidence type="ECO:0000269" key="8">
    <source>
    </source>
</evidence>
<evidence type="ECO:0000269" key="9">
    <source>
    </source>
</evidence>
<evidence type="ECO:0000269" key="10">
    <source>
    </source>
</evidence>
<evidence type="ECO:0000305" key="11"/>
<evidence type="ECO:0007744" key="12">
    <source>
    </source>
</evidence>
<comment type="function">
    <text evidence="2 5 6 8">Inhibits the Wnt/Wingless pathway by binding to CTNNB1/beta-catenin and inhibiting beta-catenin-mediated transcriptional activation through competition with TCF/LEF transcription factors (PubMed:12712206, PubMed:19435523). Has also been shown to play a role in regulating the intracellular trafficking of polycystin-2/PKD2 and possibly of other intracellular proteins (PubMed:15194699). Promotes adipocyte and cardiomyocyte differentiation (By similarity).</text>
</comment>
<comment type="subunit">
    <text evidence="5 6 7 8 9 10">Homodimer (PubMed:19435523). Homodimerization is essential for nuclear localization and interaction with KPNA4 but is dispensable for interaction with CTNNB1 (PubMed:19435523). Interacts with polycystin-2/PKD2 and GM130. Interacts with the C-terminal region of CTNNB1 (PubMed:12712206, PubMed:16424001, PubMed:19435523). Interacts (C-terminus) with TCIM (C-terminus), TCIM competes with CTNNB1 for the interaction with CBY1 (PubMed:16424001). Interacts with FAM92A; this interaction facilitates targeting of FAM92A to cilium basal body (PubMed:27528616, PubMed:30395363). Interacts with CIBAR2 (PubMed:27528616). Interacts with KPNA4 (PubMed:19435523).</text>
</comment>
<comment type="interaction">
    <interactant intactId="EBI-947308">
        <id>Q9Y3M2</id>
    </interactant>
    <interactant intactId="EBI-742422">
        <id>Q96M91</id>
        <label>CFAP53</label>
    </interactant>
    <organismsDiffer>false</organismsDiffer>
    <experiments>4</experiments>
</comment>
<comment type="interaction">
    <interactant intactId="EBI-947308">
        <id>Q9Y3M2</id>
    </interactant>
    <interactant intactId="EBI-2349888">
        <id>A1XBS5</id>
        <label>CIBAR1</label>
    </interactant>
    <organismsDiffer>false</organismsDiffer>
    <experiments>4</experiments>
</comment>
<comment type="interaction">
    <interactant intactId="EBI-947308">
        <id>Q9Y3M2</id>
    </interactant>
    <interactant intactId="EBI-12348777">
        <id>A1XBS5-3</id>
        <label>CIBAR1</label>
    </interactant>
    <organismsDiffer>false</organismsDiffer>
    <experiments>3</experiments>
</comment>
<comment type="interaction">
    <interactant intactId="EBI-947308">
        <id>Q9Y3M2</id>
    </interactant>
    <interactant intactId="EBI-10264440">
        <id>Q8IYY4</id>
        <label>DZIP1L</label>
    </interactant>
    <organismsDiffer>false</organismsDiffer>
    <experiments>4</experiments>
</comment>
<comment type="interaction">
    <interactant intactId="EBI-947308">
        <id>Q9Y3M2</id>
    </interactant>
    <interactant intactId="EBI-744099">
        <id>Q9H0I2</id>
        <label>ENKD1</label>
    </interactant>
    <organismsDiffer>false</organismsDiffer>
    <experiments>3</experiments>
</comment>
<comment type="interaction">
    <interactant intactId="EBI-947308">
        <id>Q9Y3M2</id>
    </interactant>
    <interactant intactId="EBI-7225287">
        <id>Q96MY7</id>
        <label>FAM161B</label>
    </interactant>
    <organismsDiffer>false</organismsDiffer>
    <experiments>3</experiments>
</comment>
<comment type="interaction">
    <interactant intactId="EBI-947308">
        <id>Q9Y3M2</id>
    </interactant>
    <interactant intactId="EBI-739467">
        <id>Q9H8Y8</id>
        <label>GORASP2</label>
    </interactant>
    <organismsDiffer>false</organismsDiffer>
    <experiments>3</experiments>
</comment>
<comment type="interaction">
    <interactant intactId="EBI-947308">
        <id>Q9Y3M2</id>
    </interactant>
    <interactant intactId="EBI-739832">
        <id>Q8TBB1</id>
        <label>LNX1</label>
    </interactant>
    <organismsDiffer>false</organismsDiffer>
    <experiments>3</experiments>
</comment>
<comment type="interaction">
    <interactant intactId="EBI-947308">
        <id>Q9Y3M2</id>
    </interactant>
    <interactant intactId="EBI-749285">
        <id>Q15311</id>
        <label>RALBP1</label>
    </interactant>
    <organismsDiffer>false</organismsDiffer>
    <experiments>4</experiments>
</comment>
<comment type="interaction">
    <interactant intactId="EBI-947308">
        <id>Q9Y3M2</id>
    </interactant>
    <interactant intactId="EBI-6912267">
        <id>A6NK89</id>
        <label>RASSF10</label>
    </interactant>
    <organismsDiffer>false</organismsDiffer>
    <experiments>3</experiments>
</comment>
<comment type="interaction">
    <interactant intactId="EBI-947308">
        <id>Q9Y3M2</id>
    </interactant>
    <interactant intactId="EBI-14222571">
        <id>Q5GJ75</id>
        <label>TNFAIP8L3</label>
    </interactant>
    <organismsDiffer>false</organismsDiffer>
    <experiments>3</experiments>
</comment>
<comment type="interaction">
    <interactant intactId="EBI-947308">
        <id>Q9Y3M2</id>
    </interactant>
    <interactant intactId="EBI-346882">
        <id>Q99816</id>
        <label>TSG101</label>
    </interactant>
    <organismsDiffer>false</organismsDiffer>
    <experiments>3</experiments>
</comment>
<comment type="interaction">
    <interactant intactId="EBI-947308">
        <id>Q9Y3M2</id>
    </interactant>
    <interactant intactId="EBI-10182647">
        <id>Q6PF05-3</id>
        <label>TTC23L</label>
    </interactant>
    <organismsDiffer>false</organismsDiffer>
    <experiments>3</experiments>
</comment>
<comment type="interaction">
    <interactant intactId="EBI-947308">
        <id>Q9Y3M2</id>
    </interactant>
    <interactant intactId="EBI-356498">
        <id>P62258</id>
        <label>YWHAE</label>
    </interactant>
    <organismsDiffer>false</organismsDiffer>
    <experiments>4</experiments>
</comment>
<comment type="interaction">
    <interactant intactId="EBI-947308">
        <id>Q9Y3M2</id>
    </interactant>
    <interactant intactId="EBI-347088">
        <id>P63104</id>
        <label>YWHAZ</label>
    </interactant>
    <organismsDiffer>false</organismsDiffer>
    <experiments>4</experiments>
</comment>
<comment type="subcellular location">
    <subcellularLocation>
        <location evidence="7">Nucleus speckle</location>
    </subcellularLocation>
    <subcellularLocation>
        <location evidence="9 10">Cytoplasm</location>
        <location evidence="9 10">Cytoskeleton</location>
        <location evidence="9 10">Cilium basal body</location>
    </subcellularLocation>
    <subcellularLocation>
        <location evidence="9">Cytoplasm</location>
        <location evidence="9">Cytoskeleton</location>
        <location evidence="9">Microtubule organizing center</location>
        <location evidence="9">Centrosome</location>
        <location evidence="9">Centriole</location>
    </subcellularLocation>
    <subcellularLocation>
        <location>Golgi apparatus</location>
    </subcellularLocation>
    <subcellularLocation>
        <location evidence="7">Golgi apparatus</location>
        <location evidence="7">trans-Golgi network</location>
    </subcellularLocation>
    <subcellularLocation>
        <location evidence="2">Cell projection</location>
        <location evidence="2">Cilium</location>
        <location evidence="2">Flagellum</location>
    </subcellularLocation>
    <subcellularLocation>
        <location evidence="8">Cytoplasm</location>
    </subcellularLocation>
    <subcellularLocation>
        <location evidence="8">Nucleus</location>
    </subcellularLocation>
</comment>
<comment type="tissue specificity">
    <text evidence="5">Widely expressed. Expressed at higher levels in heart, skeletal muscle, kidney and placenta. Also found in brain, lung, liver and testis. Significantly down-regulated in thyroid and metastatic uterine tumors.</text>
</comment>
<comment type="miscellaneous">
    <text>'Chibby' is Japanese for 'small'; the gene was so named for the RNAi phenotype seen in flies.</text>
</comment>
<comment type="similarity">
    <text evidence="11">Belongs to the chibby family.</text>
</comment>
<reference key="1">
    <citation type="submission" date="2000-12" db="EMBL/GenBank/DDBJ databases">
        <title>A novel cytosolic leucine-rich protein.</title>
        <authorList>
            <person name="Huang C.-H."/>
        </authorList>
    </citation>
    <scope>NUCLEOTIDE SEQUENCE [MRNA]</scope>
</reference>
<reference key="2">
    <citation type="submission" date="2003-06" db="EMBL/GenBank/DDBJ databases">
        <title>Human ARPP-binding protein, arb1.</title>
        <authorList>
            <person name="Moriyama M."/>
            <person name="Nakada C."/>
            <person name="Tsukamoto Y."/>
            <person name="Baba T."/>
            <person name="Kondo G."/>
            <person name="Ishiguro N."/>
            <person name="Horiuchi M."/>
            <person name="Sekine C."/>
            <person name="Maeda A."/>
        </authorList>
    </citation>
    <scope>NUCLEOTIDE SEQUENCE [MRNA]</scope>
    <source>
        <tissue>Heart</tissue>
    </source>
</reference>
<reference key="3">
    <citation type="journal article" date="2001" name="Genome Res.">
        <title>Towards a catalog of human genes and proteins: sequencing and analysis of 500 novel complete protein coding human cDNAs.</title>
        <authorList>
            <person name="Wiemann S."/>
            <person name="Weil B."/>
            <person name="Wellenreuther R."/>
            <person name="Gassenhuber J."/>
            <person name="Glassl S."/>
            <person name="Ansorge W."/>
            <person name="Boecher M."/>
            <person name="Bloecker H."/>
            <person name="Bauersachs S."/>
            <person name="Blum H."/>
            <person name="Lauber J."/>
            <person name="Duesterhoeft A."/>
            <person name="Beyer A."/>
            <person name="Koehrer K."/>
            <person name="Strack N."/>
            <person name="Mewes H.-W."/>
            <person name="Ottenwaelder B."/>
            <person name="Obermaier B."/>
            <person name="Tampe J."/>
            <person name="Heubner D."/>
            <person name="Wambutt R."/>
            <person name="Korn B."/>
            <person name="Klein M."/>
            <person name="Poustka A."/>
        </authorList>
    </citation>
    <scope>NUCLEOTIDE SEQUENCE [LARGE SCALE MRNA]</scope>
    <source>
        <tissue>Brain</tissue>
    </source>
</reference>
<reference key="4">
    <citation type="journal article" date="2003" name="Genome Res.">
        <title>Reevaluating human gene annotation: a second-generation analysis of chromosome 22.</title>
        <authorList>
            <person name="Collins J.E."/>
            <person name="Goward M.E."/>
            <person name="Cole C.G."/>
            <person name="Smink L.J."/>
            <person name="Huckle E.J."/>
            <person name="Knowles S."/>
            <person name="Bye J.M."/>
            <person name="Beare D.M."/>
            <person name="Dunham I."/>
        </authorList>
    </citation>
    <scope>NUCLEOTIDE SEQUENCE [LARGE SCALE MRNA]</scope>
</reference>
<reference key="5">
    <citation type="journal article" date="2004" name="Genome Biol.">
        <title>A genome annotation-driven approach to cloning the human ORFeome.</title>
        <authorList>
            <person name="Collins J.E."/>
            <person name="Wright C.L."/>
            <person name="Edwards C.A."/>
            <person name="Davis M.P."/>
            <person name="Grinham J.A."/>
            <person name="Cole C.G."/>
            <person name="Goward M.E."/>
            <person name="Aguado B."/>
            <person name="Mallya M."/>
            <person name="Mokrab Y."/>
            <person name="Huckle E.J."/>
            <person name="Beare D.M."/>
            <person name="Dunham I."/>
        </authorList>
    </citation>
    <scope>NUCLEOTIDE SEQUENCE [LARGE SCALE MRNA]</scope>
</reference>
<reference key="6">
    <citation type="journal article" date="2004" name="Nat. Genet.">
        <title>Complete sequencing and characterization of 21,243 full-length human cDNAs.</title>
        <authorList>
            <person name="Ota T."/>
            <person name="Suzuki Y."/>
            <person name="Nishikawa T."/>
            <person name="Otsuki T."/>
            <person name="Sugiyama T."/>
            <person name="Irie R."/>
            <person name="Wakamatsu A."/>
            <person name="Hayashi K."/>
            <person name="Sato H."/>
            <person name="Nagai K."/>
            <person name="Kimura K."/>
            <person name="Makita H."/>
            <person name="Sekine M."/>
            <person name="Obayashi M."/>
            <person name="Nishi T."/>
            <person name="Shibahara T."/>
            <person name="Tanaka T."/>
            <person name="Ishii S."/>
            <person name="Yamamoto J."/>
            <person name="Saito K."/>
            <person name="Kawai Y."/>
            <person name="Isono Y."/>
            <person name="Nakamura Y."/>
            <person name="Nagahari K."/>
            <person name="Murakami K."/>
            <person name="Yasuda T."/>
            <person name="Iwayanagi T."/>
            <person name="Wagatsuma M."/>
            <person name="Shiratori A."/>
            <person name="Sudo H."/>
            <person name="Hosoiri T."/>
            <person name="Kaku Y."/>
            <person name="Kodaira H."/>
            <person name="Kondo H."/>
            <person name="Sugawara M."/>
            <person name="Takahashi M."/>
            <person name="Kanda K."/>
            <person name="Yokoi T."/>
            <person name="Furuya T."/>
            <person name="Kikkawa E."/>
            <person name="Omura Y."/>
            <person name="Abe K."/>
            <person name="Kamihara K."/>
            <person name="Katsuta N."/>
            <person name="Sato K."/>
            <person name="Tanikawa M."/>
            <person name="Yamazaki M."/>
            <person name="Ninomiya K."/>
            <person name="Ishibashi T."/>
            <person name="Yamashita H."/>
            <person name="Murakawa K."/>
            <person name="Fujimori K."/>
            <person name="Tanai H."/>
            <person name="Kimata M."/>
            <person name="Watanabe M."/>
            <person name="Hiraoka S."/>
            <person name="Chiba Y."/>
            <person name="Ishida S."/>
            <person name="Ono Y."/>
            <person name="Takiguchi S."/>
            <person name="Watanabe S."/>
            <person name="Yosida M."/>
            <person name="Hotuta T."/>
            <person name="Kusano J."/>
            <person name="Kanehori K."/>
            <person name="Takahashi-Fujii A."/>
            <person name="Hara H."/>
            <person name="Tanase T.-O."/>
            <person name="Nomura Y."/>
            <person name="Togiya S."/>
            <person name="Komai F."/>
            <person name="Hara R."/>
            <person name="Takeuchi K."/>
            <person name="Arita M."/>
            <person name="Imose N."/>
            <person name="Musashino K."/>
            <person name="Yuuki H."/>
            <person name="Oshima A."/>
            <person name="Sasaki N."/>
            <person name="Aotsuka S."/>
            <person name="Yoshikawa Y."/>
            <person name="Matsunawa H."/>
            <person name="Ichihara T."/>
            <person name="Shiohata N."/>
            <person name="Sano S."/>
            <person name="Moriya S."/>
            <person name="Momiyama H."/>
            <person name="Satoh N."/>
            <person name="Takami S."/>
            <person name="Terashima Y."/>
            <person name="Suzuki O."/>
            <person name="Nakagawa S."/>
            <person name="Senoh A."/>
            <person name="Mizoguchi H."/>
            <person name="Goto Y."/>
            <person name="Shimizu F."/>
            <person name="Wakebe H."/>
            <person name="Hishigaki H."/>
            <person name="Watanabe T."/>
            <person name="Sugiyama A."/>
            <person name="Takemoto M."/>
            <person name="Kawakami B."/>
            <person name="Yamazaki M."/>
            <person name="Watanabe K."/>
            <person name="Kumagai A."/>
            <person name="Itakura S."/>
            <person name="Fukuzumi Y."/>
            <person name="Fujimori Y."/>
            <person name="Komiyama M."/>
            <person name="Tashiro H."/>
            <person name="Tanigami A."/>
            <person name="Fujiwara T."/>
            <person name="Ono T."/>
            <person name="Yamada K."/>
            <person name="Fujii Y."/>
            <person name="Ozaki K."/>
            <person name="Hirao M."/>
            <person name="Ohmori Y."/>
            <person name="Kawabata A."/>
            <person name="Hikiji T."/>
            <person name="Kobatake N."/>
            <person name="Inagaki H."/>
            <person name="Ikema Y."/>
            <person name="Okamoto S."/>
            <person name="Okitani R."/>
            <person name="Kawakami T."/>
            <person name="Noguchi S."/>
            <person name="Itoh T."/>
            <person name="Shigeta K."/>
            <person name="Senba T."/>
            <person name="Matsumura K."/>
            <person name="Nakajima Y."/>
            <person name="Mizuno T."/>
            <person name="Morinaga M."/>
            <person name="Sasaki M."/>
            <person name="Togashi T."/>
            <person name="Oyama M."/>
            <person name="Hata H."/>
            <person name="Watanabe M."/>
            <person name="Komatsu T."/>
            <person name="Mizushima-Sugano J."/>
            <person name="Satoh T."/>
            <person name="Shirai Y."/>
            <person name="Takahashi Y."/>
            <person name="Nakagawa K."/>
            <person name="Okumura K."/>
            <person name="Nagase T."/>
            <person name="Nomura N."/>
            <person name="Kikuchi H."/>
            <person name="Masuho Y."/>
            <person name="Yamashita R."/>
            <person name="Nakai K."/>
            <person name="Yada T."/>
            <person name="Nakamura Y."/>
            <person name="Ohara O."/>
            <person name="Isogai T."/>
            <person name="Sugano S."/>
        </authorList>
    </citation>
    <scope>NUCLEOTIDE SEQUENCE [LARGE SCALE MRNA]</scope>
    <source>
        <tissue>Brain</tissue>
    </source>
</reference>
<reference key="7">
    <citation type="journal article" date="1999" name="Nature">
        <title>The DNA sequence of human chromosome 22.</title>
        <authorList>
            <person name="Dunham I."/>
            <person name="Hunt A.R."/>
            <person name="Collins J.E."/>
            <person name="Bruskiewich R."/>
            <person name="Beare D.M."/>
            <person name="Clamp M."/>
            <person name="Smink L.J."/>
            <person name="Ainscough R."/>
            <person name="Almeida J.P."/>
            <person name="Babbage A.K."/>
            <person name="Bagguley C."/>
            <person name="Bailey J."/>
            <person name="Barlow K.F."/>
            <person name="Bates K.N."/>
            <person name="Beasley O.P."/>
            <person name="Bird C.P."/>
            <person name="Blakey S.E."/>
            <person name="Bridgeman A.M."/>
            <person name="Buck D."/>
            <person name="Burgess J."/>
            <person name="Burrill W.D."/>
            <person name="Burton J."/>
            <person name="Carder C."/>
            <person name="Carter N.P."/>
            <person name="Chen Y."/>
            <person name="Clark G."/>
            <person name="Clegg S.M."/>
            <person name="Cobley V.E."/>
            <person name="Cole C.G."/>
            <person name="Collier R.E."/>
            <person name="Connor R."/>
            <person name="Conroy D."/>
            <person name="Corby N.R."/>
            <person name="Coville G.J."/>
            <person name="Cox A.V."/>
            <person name="Davis J."/>
            <person name="Dawson E."/>
            <person name="Dhami P.D."/>
            <person name="Dockree C."/>
            <person name="Dodsworth S.J."/>
            <person name="Durbin R.M."/>
            <person name="Ellington A.G."/>
            <person name="Evans K.L."/>
            <person name="Fey J.M."/>
            <person name="Fleming K."/>
            <person name="French L."/>
            <person name="Garner A.A."/>
            <person name="Gilbert J.G.R."/>
            <person name="Goward M.E."/>
            <person name="Grafham D.V."/>
            <person name="Griffiths M.N.D."/>
            <person name="Hall C."/>
            <person name="Hall R.E."/>
            <person name="Hall-Tamlyn G."/>
            <person name="Heathcott R.W."/>
            <person name="Ho S."/>
            <person name="Holmes S."/>
            <person name="Hunt S.E."/>
            <person name="Jones M.C."/>
            <person name="Kershaw J."/>
            <person name="Kimberley A.M."/>
            <person name="King A."/>
            <person name="Laird G.K."/>
            <person name="Langford C.F."/>
            <person name="Leversha M.A."/>
            <person name="Lloyd C."/>
            <person name="Lloyd D.M."/>
            <person name="Martyn I.D."/>
            <person name="Mashreghi-Mohammadi M."/>
            <person name="Matthews L.H."/>
            <person name="Mccann O.T."/>
            <person name="Mcclay J."/>
            <person name="Mclaren S."/>
            <person name="McMurray A.A."/>
            <person name="Milne S.A."/>
            <person name="Mortimore B.J."/>
            <person name="Odell C.N."/>
            <person name="Pavitt R."/>
            <person name="Pearce A.V."/>
            <person name="Pearson D."/>
            <person name="Phillimore B.J.C.T."/>
            <person name="Phillips S.H."/>
            <person name="Plumb R.W."/>
            <person name="Ramsay H."/>
            <person name="Ramsey Y."/>
            <person name="Rogers L."/>
            <person name="Ross M.T."/>
            <person name="Scott C.E."/>
            <person name="Sehra H.K."/>
            <person name="Skuce C.D."/>
            <person name="Smalley S."/>
            <person name="Smith M.L."/>
            <person name="Soderlund C."/>
            <person name="Spragon L."/>
            <person name="Steward C.A."/>
            <person name="Sulston J.E."/>
            <person name="Swann R.M."/>
            <person name="Vaudin M."/>
            <person name="Wall M."/>
            <person name="Wallis J.M."/>
            <person name="Whiteley M.N."/>
            <person name="Willey D.L."/>
            <person name="Williams L."/>
            <person name="Williams S.A."/>
            <person name="Williamson H."/>
            <person name="Wilmer T.E."/>
            <person name="Wilming L."/>
            <person name="Wright C.L."/>
            <person name="Hubbard T."/>
            <person name="Bentley D.R."/>
            <person name="Beck S."/>
            <person name="Rogers J."/>
            <person name="Shimizu N."/>
            <person name="Minoshima S."/>
            <person name="Kawasaki K."/>
            <person name="Sasaki T."/>
            <person name="Asakawa S."/>
            <person name="Kudoh J."/>
            <person name="Shintani A."/>
            <person name="Shibuya K."/>
            <person name="Yoshizaki Y."/>
            <person name="Aoki N."/>
            <person name="Mitsuyama S."/>
            <person name="Roe B.A."/>
            <person name="Chen F."/>
            <person name="Chu L."/>
            <person name="Crabtree J."/>
            <person name="Deschamps S."/>
            <person name="Do A."/>
            <person name="Do T."/>
            <person name="Dorman A."/>
            <person name="Fang F."/>
            <person name="Fu Y."/>
            <person name="Hu P."/>
            <person name="Hua A."/>
            <person name="Kenton S."/>
            <person name="Lai H."/>
            <person name="Lao H.I."/>
            <person name="Lewis J."/>
            <person name="Lewis S."/>
            <person name="Lin S.-P."/>
            <person name="Loh P."/>
            <person name="Malaj E."/>
            <person name="Nguyen T."/>
            <person name="Pan H."/>
            <person name="Phan S."/>
            <person name="Qi S."/>
            <person name="Qian Y."/>
            <person name="Ray L."/>
            <person name="Ren Q."/>
            <person name="Shaull S."/>
            <person name="Sloan D."/>
            <person name="Song L."/>
            <person name="Wang Q."/>
            <person name="Wang Y."/>
            <person name="Wang Z."/>
            <person name="White J."/>
            <person name="Willingham D."/>
            <person name="Wu H."/>
            <person name="Yao Z."/>
            <person name="Zhan M."/>
            <person name="Zhang G."/>
            <person name="Chissoe S."/>
            <person name="Murray J."/>
            <person name="Miller N."/>
            <person name="Minx P."/>
            <person name="Fulton R."/>
            <person name="Johnson D."/>
            <person name="Bemis G."/>
            <person name="Bentley D."/>
            <person name="Bradshaw H."/>
            <person name="Bourne S."/>
            <person name="Cordes M."/>
            <person name="Du Z."/>
            <person name="Fulton L."/>
            <person name="Goela D."/>
            <person name="Graves T."/>
            <person name="Hawkins J."/>
            <person name="Hinds K."/>
            <person name="Kemp K."/>
            <person name="Latreille P."/>
            <person name="Layman D."/>
            <person name="Ozersky P."/>
            <person name="Rohlfing T."/>
            <person name="Scheet P."/>
            <person name="Walker C."/>
            <person name="Wamsley A."/>
            <person name="Wohldmann P."/>
            <person name="Pepin K."/>
            <person name="Nelson J."/>
            <person name="Korf I."/>
            <person name="Bedell J.A."/>
            <person name="Hillier L.W."/>
            <person name="Mardis E."/>
            <person name="Waterston R."/>
            <person name="Wilson R."/>
            <person name="Emanuel B.S."/>
            <person name="Shaikh T."/>
            <person name="Kurahashi H."/>
            <person name="Saitta S."/>
            <person name="Budarf M.L."/>
            <person name="McDermid H.E."/>
            <person name="Johnson A."/>
            <person name="Wong A.C.C."/>
            <person name="Morrow B.E."/>
            <person name="Edelmann L."/>
            <person name="Kim U.J."/>
            <person name="Shizuya H."/>
            <person name="Simon M.I."/>
            <person name="Dumanski J.P."/>
            <person name="Peyrard M."/>
            <person name="Kedra D."/>
            <person name="Seroussi E."/>
            <person name="Fransson I."/>
            <person name="Tapia I."/>
            <person name="Bruder C.E."/>
            <person name="O'Brien K.P."/>
            <person name="Wilkinson P."/>
            <person name="Bodenteich A."/>
            <person name="Hartman K."/>
            <person name="Hu X."/>
            <person name="Khan A.S."/>
            <person name="Lane L."/>
            <person name="Tilahun Y."/>
            <person name="Wright H."/>
        </authorList>
    </citation>
    <scope>NUCLEOTIDE SEQUENCE [LARGE SCALE GENOMIC DNA]</scope>
</reference>
<reference key="8">
    <citation type="submission" date="2005-07" db="EMBL/GenBank/DDBJ databases">
        <authorList>
            <person name="Mural R.J."/>
            <person name="Istrail S."/>
            <person name="Sutton G.G."/>
            <person name="Florea L."/>
            <person name="Halpern A.L."/>
            <person name="Mobarry C.M."/>
            <person name="Lippert R."/>
            <person name="Walenz B."/>
            <person name="Shatkay H."/>
            <person name="Dew I."/>
            <person name="Miller J.R."/>
            <person name="Flanigan M.J."/>
            <person name="Edwards N.J."/>
            <person name="Bolanos R."/>
            <person name="Fasulo D."/>
            <person name="Halldorsson B.V."/>
            <person name="Hannenhalli S."/>
            <person name="Turner R."/>
            <person name="Yooseph S."/>
            <person name="Lu F."/>
            <person name="Nusskern D.R."/>
            <person name="Shue B.C."/>
            <person name="Zheng X.H."/>
            <person name="Zhong F."/>
            <person name="Delcher A.L."/>
            <person name="Huson D.H."/>
            <person name="Kravitz S.A."/>
            <person name="Mouchard L."/>
            <person name="Reinert K."/>
            <person name="Remington K.A."/>
            <person name="Clark A.G."/>
            <person name="Waterman M.S."/>
            <person name="Eichler E.E."/>
            <person name="Adams M.D."/>
            <person name="Hunkapiller M.W."/>
            <person name="Myers E.W."/>
            <person name="Venter J.C."/>
        </authorList>
    </citation>
    <scope>NUCLEOTIDE SEQUENCE [LARGE SCALE GENOMIC DNA]</scope>
</reference>
<reference key="9">
    <citation type="journal article" date="2004" name="Genome Res.">
        <title>The status, quality, and expansion of the NIH full-length cDNA project: the Mammalian Gene Collection (MGC).</title>
        <authorList>
            <consortium name="The MGC Project Team"/>
        </authorList>
    </citation>
    <scope>NUCLEOTIDE SEQUENCE [LARGE SCALE MRNA]</scope>
    <source>
        <tissue>Skin</tissue>
    </source>
</reference>
<reference key="10">
    <citation type="submission" date="1998-06" db="EMBL/GenBank/DDBJ databases">
        <title>HRI NTT human fetal brain cDNA project.</title>
        <authorList>
            <person name="Ueki N."/>
        </authorList>
    </citation>
    <scope>NUCLEOTIDE SEQUENCE [LARGE SCALE MRNA] OF 60-126</scope>
    <source>
        <tissue>Fetal brain</tissue>
    </source>
</reference>
<reference key="11">
    <citation type="journal article" date="2003" name="Nature">
        <title>Chibby, a nuclear beta-catenin-associated antagonist of the Wnt/Wingless pathway.</title>
        <authorList>
            <person name="Takemaru K."/>
            <person name="Yamaguchi S."/>
            <person name="Lee Y.S."/>
            <person name="Zhang Y."/>
            <person name="Carthew R.W."/>
            <person name="Moon R.T."/>
        </authorList>
    </citation>
    <scope>FUNCTION</scope>
    <scope>SUBCELLULAR LOCATION</scope>
    <scope>TISSUE SPECIFICITY</scope>
    <scope>INTERACTION WITH CTNNB1</scope>
</reference>
<reference key="12">
    <citation type="journal article" date="2004" name="J. Biol. Chem.">
        <title>PIGEA-14, a novel coiled-coil protein affecting the intracellular distribution of polycystin-2.</title>
        <authorList>
            <person name="Hidaka S."/>
            <person name="Koenecke V."/>
            <person name="Osten L."/>
            <person name="Witzgall R."/>
        </authorList>
    </citation>
    <scope>IDENTIFICATION</scope>
    <scope>FUNCTION</scope>
    <scope>SUBCELLULAR LOCATION</scope>
    <scope>INTERACTION WITH PKD2 AND GM130</scope>
</reference>
<reference key="13">
    <citation type="journal article" date="2006" name="Cancer Res.">
        <title>TC1 (C8orf4) enhances the Wnt/beta-catenin pathway by relieving antagonistic activity of Chibby.</title>
        <authorList>
            <person name="Jung Y."/>
            <person name="Bang S."/>
            <person name="Choi K."/>
            <person name="Kim E."/>
            <person name="Kim Y."/>
            <person name="Kim J."/>
            <person name="Park J."/>
            <person name="Koo H."/>
            <person name="Moon R.T."/>
            <person name="Song K."/>
            <person name="Lee I."/>
        </authorList>
    </citation>
    <scope>INTERACTION WITH TCIM AND CTNNB1</scope>
    <scope>SUBCELLULAR LOCATION</scope>
</reference>
<reference key="14">
    <citation type="journal article" date="2009" name="Anal. Chem.">
        <title>Lys-N and trypsin cover complementary parts of the phosphoproteome in a refined SCX-based approach.</title>
        <authorList>
            <person name="Gauci S."/>
            <person name="Helbig A.O."/>
            <person name="Slijper M."/>
            <person name="Krijgsveld J."/>
            <person name="Heck A.J."/>
            <person name="Mohammed S."/>
        </authorList>
    </citation>
    <scope>IDENTIFICATION BY MASS SPECTROMETRY [LARGE SCALE ANALYSIS]</scope>
</reference>
<reference key="15">
    <citation type="journal article" date="2009" name="BMC Mol. Biol.">
        <title>Chibby forms a homodimer through a heptad repeat of leucine residues in its C-terminal coiled-coil motif.</title>
        <authorList>
            <person name="Mofunanya A."/>
            <person name="Li F.Q."/>
            <person name="Hsieh J.C."/>
            <person name="Takemaru K."/>
        </authorList>
    </citation>
    <scope>FUNCTION</scope>
    <scope>SUBUNIT</scope>
    <scope>SUBCELLULAR LOCATION</scope>
    <scope>LEUCINE-ZIPPER</scope>
    <scope>INTERACTION WITH CTNNB1 AND KPNA4</scope>
    <scope>MUTAGENESIS OF LEU-77; LEU-84; LEU-91 AND LEU-98</scope>
</reference>
<reference key="16">
    <citation type="journal article" date="2013" name="J. Proteome Res.">
        <title>Toward a comprehensive characterization of a human cancer cell phosphoproteome.</title>
        <authorList>
            <person name="Zhou H."/>
            <person name="Di Palma S."/>
            <person name="Preisinger C."/>
            <person name="Peng M."/>
            <person name="Polat A.N."/>
            <person name="Heck A.J."/>
            <person name="Mohammed S."/>
        </authorList>
    </citation>
    <scope>PHOSPHORYLATION [LARGE SCALE ANALYSIS] AT SER-20</scope>
    <scope>IDENTIFICATION BY MASS SPECTROMETRY [LARGE SCALE ANALYSIS]</scope>
    <source>
        <tissue>Cervix carcinoma</tissue>
        <tissue>Erythroleukemia</tissue>
    </source>
</reference>
<reference key="17">
    <citation type="journal article" date="2016" name="Mol. Cell. Biol.">
        <title>BAR domain-containing FAM92 proteins interact with chibby1 to facilitate ciliogenesis.</title>
        <authorList>
            <person name="Li F.Q."/>
            <person name="Chen X."/>
            <person name="Fisher C."/>
            <person name="Siller S.S."/>
            <person name="Zelikman K."/>
            <person name="Kuriyama R."/>
            <person name="Takemaru K.I."/>
        </authorList>
    </citation>
    <scope>INTERACTION WITH FAM92A AND CIBAR2</scope>
    <scope>SUBCELLULAR LOCATION</scope>
</reference>
<reference key="18">
    <citation type="journal article" date="2019" name="J. Bone Miner. Res.">
        <title>FAM92A underlies nonsyndromic postaxial polydactyly in humans and an abnormal limb and digit skeletal phenotype in mice.</title>
        <authorList>
            <person name="Schrauwen I."/>
            <person name="Giese A.P."/>
            <person name="Aziz A."/>
            <person name="Lafont D.T."/>
            <person name="Chakchouk I."/>
            <person name="Santos-Cortez R.L.P."/>
            <person name="Lee K."/>
            <person name="Acharya A."/>
            <person name="Khan F.S."/>
            <person name="Ullah A."/>
            <person name="Nickerson D.A."/>
            <person name="Bamshad M.J."/>
            <person name="Ali G."/>
            <person name="Riazuddin S."/>
            <person name="Ansar M."/>
            <person name="Ahmad W."/>
            <person name="Ahmed Z.M."/>
            <person name="Leal S.M."/>
        </authorList>
    </citation>
    <scope>INTERACTION WITH FAM92A</scope>
    <scope>SUBCELLULAR LOCATION</scope>
</reference>
<protein>
    <recommendedName>
        <fullName>Protein chibby homolog 1</fullName>
    </recommendedName>
    <alternativeName>
        <fullName>ARPP-binding protein</fullName>
    </alternativeName>
    <alternativeName>
        <fullName>Cytosolic leucine-rich protein</fullName>
    </alternativeName>
    <alternativeName>
        <fullName>PIGEA-14</fullName>
    </alternativeName>
    <alternativeName>
        <fullName>PKD2 interactor, Golgi and endoplasmic reticulum-associated 1</fullName>
    </alternativeName>
</protein>
<sequence length="126" mass="14470">MPFFGNTFSPKKTPPRKSASLSNLHSLDRSTREVELGLEYGSPTMNLAGQSLKFENGQWIAETGVSGGVDRREVQRLRRRNQQLEEENNLLRLKVDILLDMLSESTAESHLMEKELDELRISRKRK</sequence>
<proteinExistence type="evidence at protein level"/>
<feature type="chain" id="PRO_0000058354" description="Protein chibby homolog 1">
    <location>
        <begin position="1"/>
        <end position="126"/>
    </location>
</feature>
<feature type="region of interest" description="Disordered" evidence="4">
    <location>
        <begin position="1"/>
        <end position="26"/>
    </location>
</feature>
<feature type="region of interest" description="Minimal region for the interaction with PKD2" evidence="6">
    <location>
        <begin position="60"/>
        <end position="112"/>
    </location>
</feature>
<feature type="region of interest" description="Leucine-zipper; mediates homodimerization" evidence="8">
    <location>
        <begin position="77"/>
        <end position="98"/>
    </location>
</feature>
<feature type="coiled-coil region" evidence="3">
    <location>
        <begin position="67"/>
        <end position="125"/>
    </location>
</feature>
<feature type="compositionally biased region" description="Polar residues" evidence="4">
    <location>
        <begin position="1"/>
        <end position="10"/>
    </location>
</feature>
<feature type="modified residue" description="Phosphoserine" evidence="1">
    <location>
        <position position="9"/>
    </location>
</feature>
<feature type="modified residue" description="Phosphoserine" evidence="12">
    <location>
        <position position="20"/>
    </location>
</feature>
<feature type="mutagenesis site" description="No effect on homodimerization, nuclear localization and interaction with CTNNB1 but a slight reduction in interaction with KPNA4. Loss of homodimerization, reduced nuclear localization, significant reduction in interaction with KPNA4 but no effect on interaction with CTNNB1; when associated with A-91. Loss of homodimerization; when associated with A-84 or A-98. Loss of homodimerization but no effect on interaction with CTNNB1; when associated with A-84; A-91 and A-98." evidence="8">
    <original>L</original>
    <variation>A</variation>
    <location>
        <position position="77"/>
    </location>
</feature>
<feature type="mutagenesis site" description="Reduced homodimerization. Loss of homodimerization; when associated with A-77 or A-91 or A-98 or A-77; A-91 and A-98." evidence="8">
    <original>L</original>
    <variation>A</variation>
    <location>
        <position position="84"/>
    </location>
</feature>
<feature type="mutagenesis site" description="No effect homodimerization, nuclear localization and interaction with CTNNB1 but a slight reduction in interaction with KPNA4. Loss of homodimerization, reduced nuclear localization, significant reduction in interaction with KPNA4 but no effect on interaction with CTNNB1; when associated with A-77. Loss of homodimerization; when associated with A-84 or A-98. Loss of homodimerization but no effect on interaction with CTNNB1; when assocaited with A-77; A-84 and A-98." evidence="8">
    <original>L</original>
    <variation>A</variation>
    <location>
        <position position="91"/>
    </location>
</feature>
<feature type="mutagenesis site" description="No effect on its homodimerization. Loss of homodimerization; when associated with A-77 or A-84 or A-91 or A-77; A-84 and A-91." evidence="8">
    <original>L</original>
    <variation>A</variation>
    <location>
        <position position="98"/>
    </location>
</feature>
<feature type="sequence conflict" description="In Ref. 1; AAL56062." evidence="11" ref="1">
    <original>E</original>
    <variation>K</variation>
    <location>
        <position position="73"/>
    </location>
</feature>
<organism>
    <name type="scientific">Homo sapiens</name>
    <name type="common">Human</name>
    <dbReference type="NCBI Taxonomy" id="9606"/>
    <lineage>
        <taxon>Eukaryota</taxon>
        <taxon>Metazoa</taxon>
        <taxon>Chordata</taxon>
        <taxon>Craniata</taxon>
        <taxon>Vertebrata</taxon>
        <taxon>Euteleostomi</taxon>
        <taxon>Mammalia</taxon>
        <taxon>Eutheria</taxon>
        <taxon>Euarchontoglires</taxon>
        <taxon>Primates</taxon>
        <taxon>Haplorrhini</taxon>
        <taxon>Catarrhini</taxon>
        <taxon>Hominidae</taxon>
        <taxon>Homo</taxon>
    </lineage>
</organism>
<keyword id="KW-0002">3D-structure</keyword>
<keyword id="KW-0966">Cell projection</keyword>
<keyword id="KW-0969">Cilium</keyword>
<keyword id="KW-0970">Cilium biogenesis/degradation</keyword>
<keyword id="KW-0175">Coiled coil</keyword>
<keyword id="KW-0963">Cytoplasm</keyword>
<keyword id="KW-0206">Cytoskeleton</keyword>
<keyword id="KW-0221">Differentiation</keyword>
<keyword id="KW-0282">Flagellum</keyword>
<keyword id="KW-0333">Golgi apparatus</keyword>
<keyword id="KW-0539">Nucleus</keyword>
<keyword id="KW-0597">Phosphoprotein</keyword>
<keyword id="KW-1267">Proteomics identification</keyword>
<keyword id="KW-1185">Reference proteome</keyword>
<accession>Q9Y3M2</accession>
<accession>B2R4S2</accession>
<accession>Q66GT6</accession>
<accession>Q9UIK9</accession>
<gene>
    <name type="primary">CBY1</name>
    <name type="synonym">ARB1</name>
    <name type="synonym">C22orf2</name>
    <name type="synonym">CBY</name>
    <name type="synonym">PGEA1</name>
    <name type="ORF">HRIHFB2025</name>
</gene>